<organism>
    <name type="scientific">Symbiobacterium thermophilum (strain DSM 24528 / JCM 14929 / IAM 14863 / T)</name>
    <dbReference type="NCBI Taxonomy" id="292459"/>
    <lineage>
        <taxon>Bacteria</taxon>
        <taxon>Bacillati</taxon>
        <taxon>Bacillota</taxon>
        <taxon>Clostridia</taxon>
        <taxon>Eubacteriales</taxon>
        <taxon>Symbiobacteriaceae</taxon>
        <taxon>Symbiobacterium</taxon>
    </lineage>
</organism>
<reference key="1">
    <citation type="journal article" date="2004" name="Nucleic Acids Res.">
        <title>Genome sequence of Symbiobacterium thermophilum, an uncultivable bacterium that depends on microbial commensalism.</title>
        <authorList>
            <person name="Ueda K."/>
            <person name="Yamashita A."/>
            <person name="Ishikawa J."/>
            <person name="Shimada M."/>
            <person name="Watsuji T."/>
            <person name="Morimura K."/>
            <person name="Ikeda H."/>
            <person name="Hattori M."/>
            <person name="Beppu T."/>
        </authorList>
    </citation>
    <scope>NUCLEOTIDE SEQUENCE [LARGE SCALE GENOMIC DNA]</scope>
    <source>
        <strain>DSM 24528 / JCM 14929 / IAM 14863 / T</strain>
    </source>
</reference>
<name>MENG_SYMTH</name>
<protein>
    <recommendedName>
        <fullName evidence="1">Demethylmenaquinone methyltransferase</fullName>
        <ecNumber evidence="1">2.1.1.163</ecNumber>
    </recommendedName>
</protein>
<sequence>MAPGYQPPSPEEKEQYVRELFDKIAENYDAMNQVMSAGQWEKWHREFVAQTHFRPGDHILDVACGTGDLTLLDAAQVAPDGKVIGVDISEGMLEVGRRRVAASPYKDLITLQLGNAMDLPFPDNTFDGVTMGWAMRNVASIPRTLSEIYRVLKPGGRFICLEASKPFSRFIRFGFFVYWKTFLPLIDWFVVKAGRQAKVRPYTYLSRSLDNYPFPDQLEELFREAGFVETDYQLLMLGTVAIHVGTKRREG</sequence>
<evidence type="ECO:0000255" key="1">
    <source>
        <dbReference type="HAMAP-Rule" id="MF_01813"/>
    </source>
</evidence>
<proteinExistence type="inferred from homology"/>
<gene>
    <name evidence="1" type="primary">menG</name>
    <name type="ordered locus">STH2515</name>
</gene>
<accession>Q67LE6</accession>
<keyword id="KW-0474">Menaquinone biosynthesis</keyword>
<keyword id="KW-0489">Methyltransferase</keyword>
<keyword id="KW-1185">Reference proteome</keyword>
<keyword id="KW-0949">S-adenosyl-L-methionine</keyword>
<keyword id="KW-0808">Transferase</keyword>
<dbReference type="EC" id="2.1.1.163" evidence="1"/>
<dbReference type="EMBL" id="AP006840">
    <property type="protein sequence ID" value="BAD41500.1"/>
    <property type="molecule type" value="Genomic_DNA"/>
</dbReference>
<dbReference type="RefSeq" id="WP_011196638.1">
    <property type="nucleotide sequence ID" value="NC_006177.1"/>
</dbReference>
<dbReference type="SMR" id="Q67LE6"/>
<dbReference type="STRING" id="292459.STH2515"/>
<dbReference type="KEGG" id="sth:STH2515"/>
<dbReference type="eggNOG" id="COG2226">
    <property type="taxonomic scope" value="Bacteria"/>
</dbReference>
<dbReference type="HOGENOM" id="CLU_037990_0_0_9"/>
<dbReference type="OrthoDB" id="9808140at2"/>
<dbReference type="UniPathway" id="UPA00079">
    <property type="reaction ID" value="UER00169"/>
</dbReference>
<dbReference type="Proteomes" id="UP000000417">
    <property type="component" value="Chromosome"/>
</dbReference>
<dbReference type="GO" id="GO:0043770">
    <property type="term" value="F:demethylmenaquinone methyltransferase activity"/>
    <property type="evidence" value="ECO:0007669"/>
    <property type="project" value="UniProtKB-UniRule"/>
</dbReference>
<dbReference type="GO" id="GO:0009234">
    <property type="term" value="P:menaquinone biosynthetic process"/>
    <property type="evidence" value="ECO:0007669"/>
    <property type="project" value="UniProtKB-UniRule"/>
</dbReference>
<dbReference type="GO" id="GO:0032259">
    <property type="term" value="P:methylation"/>
    <property type="evidence" value="ECO:0007669"/>
    <property type="project" value="UniProtKB-KW"/>
</dbReference>
<dbReference type="CDD" id="cd02440">
    <property type="entry name" value="AdoMet_MTases"/>
    <property type="match status" value="1"/>
</dbReference>
<dbReference type="Gene3D" id="3.40.50.150">
    <property type="entry name" value="Vaccinia Virus protein VP39"/>
    <property type="match status" value="1"/>
</dbReference>
<dbReference type="HAMAP" id="MF_01813">
    <property type="entry name" value="MenG_UbiE_methyltr"/>
    <property type="match status" value="1"/>
</dbReference>
<dbReference type="InterPro" id="IPR029063">
    <property type="entry name" value="SAM-dependent_MTases_sf"/>
</dbReference>
<dbReference type="InterPro" id="IPR004033">
    <property type="entry name" value="UbiE/COQ5_MeTrFase"/>
</dbReference>
<dbReference type="InterPro" id="IPR023576">
    <property type="entry name" value="UbiE/COQ5_MeTrFase_CS"/>
</dbReference>
<dbReference type="NCBIfam" id="TIGR01934">
    <property type="entry name" value="MenG_MenH_UbiE"/>
    <property type="match status" value="1"/>
</dbReference>
<dbReference type="NCBIfam" id="NF001244">
    <property type="entry name" value="PRK00216.1-5"/>
    <property type="match status" value="1"/>
</dbReference>
<dbReference type="PANTHER" id="PTHR43591:SF24">
    <property type="entry name" value="2-METHOXY-6-POLYPRENYL-1,4-BENZOQUINOL METHYLASE, MITOCHONDRIAL"/>
    <property type="match status" value="1"/>
</dbReference>
<dbReference type="PANTHER" id="PTHR43591">
    <property type="entry name" value="METHYLTRANSFERASE"/>
    <property type="match status" value="1"/>
</dbReference>
<dbReference type="Pfam" id="PF01209">
    <property type="entry name" value="Ubie_methyltran"/>
    <property type="match status" value="1"/>
</dbReference>
<dbReference type="SUPFAM" id="SSF53335">
    <property type="entry name" value="S-adenosyl-L-methionine-dependent methyltransferases"/>
    <property type="match status" value="1"/>
</dbReference>
<dbReference type="PROSITE" id="PS51608">
    <property type="entry name" value="SAM_MT_UBIE"/>
    <property type="match status" value="1"/>
</dbReference>
<dbReference type="PROSITE" id="PS01184">
    <property type="entry name" value="UBIE_2"/>
    <property type="match status" value="1"/>
</dbReference>
<comment type="function">
    <text evidence="1">Methyltransferase required for the conversion of demethylmenaquinol (DMKH2) to menaquinol (MKH2).</text>
</comment>
<comment type="catalytic activity">
    <reaction evidence="1">
        <text>a 2-demethylmenaquinol + S-adenosyl-L-methionine = a menaquinol + S-adenosyl-L-homocysteine + H(+)</text>
        <dbReference type="Rhea" id="RHEA:42640"/>
        <dbReference type="Rhea" id="RHEA-COMP:9539"/>
        <dbReference type="Rhea" id="RHEA-COMP:9563"/>
        <dbReference type="ChEBI" id="CHEBI:15378"/>
        <dbReference type="ChEBI" id="CHEBI:18151"/>
        <dbReference type="ChEBI" id="CHEBI:55437"/>
        <dbReference type="ChEBI" id="CHEBI:57856"/>
        <dbReference type="ChEBI" id="CHEBI:59789"/>
        <dbReference type="EC" id="2.1.1.163"/>
    </reaction>
</comment>
<comment type="pathway">
    <text evidence="1">Quinol/quinone metabolism; menaquinone biosynthesis; menaquinol from 1,4-dihydroxy-2-naphthoate: step 2/2.</text>
</comment>
<comment type="similarity">
    <text evidence="1">Belongs to the class I-like SAM-binding methyltransferase superfamily. MenG/UbiE family.</text>
</comment>
<feature type="chain" id="PRO_0000193339" description="Demethylmenaquinone methyltransferase">
    <location>
        <begin position="1"/>
        <end position="251"/>
    </location>
</feature>
<feature type="binding site" evidence="1">
    <location>
        <position position="66"/>
    </location>
    <ligand>
        <name>S-adenosyl-L-methionine</name>
        <dbReference type="ChEBI" id="CHEBI:59789"/>
    </ligand>
</feature>
<feature type="binding site" evidence="1">
    <location>
        <position position="87"/>
    </location>
    <ligand>
        <name>S-adenosyl-L-methionine</name>
        <dbReference type="ChEBI" id="CHEBI:59789"/>
    </ligand>
</feature>
<feature type="binding site" evidence="1">
    <location>
        <begin position="115"/>
        <end position="116"/>
    </location>
    <ligand>
        <name>S-adenosyl-L-methionine</name>
        <dbReference type="ChEBI" id="CHEBI:59789"/>
    </ligand>
</feature>